<comment type="subcellular location">
    <subcellularLocation>
        <location evidence="1">Nucleus</location>
        <location evidence="1">Nucleolus</location>
    </subcellularLocation>
</comment>
<comment type="tissue specificity">
    <text evidence="4">Expressed in the cerebrum, cerebellum and testis.</text>
</comment>
<comment type="similarity">
    <text evidence="5">Belongs to the PNMA family.</text>
</comment>
<keyword id="KW-0002">3D-structure</keyword>
<keyword id="KW-0007">Acetylation</keyword>
<keyword id="KW-0539">Nucleus</keyword>
<keyword id="KW-1185">Reference proteome</keyword>
<name>PNMA2_MOUSE</name>
<proteinExistence type="evidence at protein level"/>
<gene>
    <name type="primary">Pnma2</name>
</gene>
<feature type="initiator methionine" description="Removed" evidence="2">
    <location>
        <position position="1"/>
    </location>
</feature>
<feature type="chain" id="PRO_0000155204" description="Paraneoplastic antigen Ma2 homolog">
    <location>
        <begin position="2"/>
        <end position="365"/>
    </location>
</feature>
<feature type="region of interest" description="Disordered" evidence="3">
    <location>
        <begin position="336"/>
        <end position="365"/>
    </location>
</feature>
<feature type="compositionally biased region" description="Basic and acidic residues" evidence="3">
    <location>
        <begin position="344"/>
        <end position="355"/>
    </location>
</feature>
<feature type="modified residue" description="N-acetylalanine" evidence="2">
    <location>
        <position position="2"/>
    </location>
</feature>
<feature type="strand" evidence="7">
    <location>
        <begin position="160"/>
        <end position="164"/>
    </location>
</feature>
<feature type="helix" evidence="6">
    <location>
        <begin position="181"/>
        <end position="193"/>
    </location>
</feature>
<feature type="helix" evidence="6">
    <location>
        <begin position="199"/>
        <end position="208"/>
    </location>
</feature>
<feature type="helix" evidence="6">
    <location>
        <begin position="213"/>
        <end position="224"/>
    </location>
</feature>
<feature type="helix" evidence="6">
    <location>
        <begin position="230"/>
        <end position="241"/>
    </location>
</feature>
<feature type="helix" evidence="6">
    <location>
        <begin position="247"/>
        <end position="255"/>
    </location>
</feature>
<feature type="helix" evidence="6">
    <location>
        <begin position="265"/>
        <end position="281"/>
    </location>
</feature>
<feature type="helix" evidence="6">
    <location>
        <begin position="287"/>
        <end position="289"/>
    </location>
</feature>
<feature type="helix" evidence="6">
    <location>
        <begin position="290"/>
        <end position="301"/>
    </location>
</feature>
<feature type="helix" evidence="6">
    <location>
        <begin position="306"/>
        <end position="317"/>
    </location>
</feature>
<feature type="strand" evidence="6">
    <location>
        <begin position="318"/>
        <end position="320"/>
    </location>
</feature>
<feature type="helix" evidence="6">
    <location>
        <begin position="324"/>
        <end position="335"/>
    </location>
</feature>
<dbReference type="EMBL" id="AK043718">
    <property type="protein sequence ID" value="BAC31626.1"/>
    <property type="molecule type" value="mRNA"/>
</dbReference>
<dbReference type="EMBL" id="AK043910">
    <property type="protein sequence ID" value="BAC31700.1"/>
    <property type="molecule type" value="mRNA"/>
</dbReference>
<dbReference type="EMBL" id="BC065116">
    <property type="protein sequence ID" value="AAH65116.1"/>
    <property type="molecule type" value="mRNA"/>
</dbReference>
<dbReference type="CCDS" id="CCDS27226.1"/>
<dbReference type="RefSeq" id="NP_780707.1">
    <property type="nucleotide sequence ID" value="NM_175498.4"/>
</dbReference>
<dbReference type="RefSeq" id="XP_006519052.1">
    <property type="nucleotide sequence ID" value="XM_006518989.5"/>
</dbReference>
<dbReference type="RefSeq" id="XP_006519053.1">
    <property type="nucleotide sequence ID" value="XM_006518990.4"/>
</dbReference>
<dbReference type="PDB" id="8RB3">
    <property type="method" value="EM"/>
    <property type="resolution" value="3.20 A"/>
    <property type="chains" value="A=157-336"/>
</dbReference>
<dbReference type="PDB" id="8RB4">
    <property type="method" value="EM"/>
    <property type="resolution" value="3.20 A"/>
    <property type="chains" value="A/D/F/I/J=157-336"/>
</dbReference>
<dbReference type="PDB" id="8RB5">
    <property type="method" value="EM"/>
    <property type="resolution" value="3.30 A"/>
    <property type="chains" value="A/B/C=157-336"/>
</dbReference>
<dbReference type="PDB" id="8RB7">
    <property type="method" value="EM"/>
    <property type="resolution" value="3.20 A"/>
    <property type="chains" value="A/B=157-336"/>
</dbReference>
<dbReference type="PDBsum" id="8RB3"/>
<dbReference type="PDBsum" id="8RB4"/>
<dbReference type="PDBsum" id="8RB5"/>
<dbReference type="PDBsum" id="8RB7"/>
<dbReference type="EMDB" id="EMD-19024"/>
<dbReference type="EMDB" id="EMD-19025"/>
<dbReference type="EMDB" id="EMD-19026"/>
<dbReference type="EMDB" id="EMD-19027"/>
<dbReference type="SMR" id="Q8BHK0"/>
<dbReference type="FunCoup" id="Q8BHK0">
    <property type="interactions" value="76"/>
</dbReference>
<dbReference type="IntAct" id="Q8BHK0">
    <property type="interactions" value="1"/>
</dbReference>
<dbReference type="MINT" id="Q8BHK0"/>
<dbReference type="STRING" id="10090.ENSMUSP00000086646"/>
<dbReference type="GlyGen" id="Q8BHK0">
    <property type="glycosylation" value="1 site"/>
</dbReference>
<dbReference type="PhosphoSitePlus" id="Q8BHK0"/>
<dbReference type="PaxDb" id="10090-ENSMUSP00000086646"/>
<dbReference type="ProteomicsDB" id="289351"/>
<dbReference type="Antibodypedia" id="35067">
    <property type="antibodies" value="177 antibodies from 24 providers"/>
</dbReference>
<dbReference type="DNASU" id="239157"/>
<dbReference type="Ensembl" id="ENSMUST00000089236.11">
    <property type="protein sequence ID" value="ENSMUSP00000086646.4"/>
    <property type="gene ID" value="ENSMUSG00000046204.15"/>
</dbReference>
<dbReference type="Ensembl" id="ENSMUST00000122431.3">
    <property type="protein sequence ID" value="ENSMUSP00000112629.3"/>
    <property type="gene ID" value="ENSMUSG00000046204.15"/>
</dbReference>
<dbReference type="GeneID" id="239157"/>
<dbReference type="KEGG" id="mmu:239157"/>
<dbReference type="UCSC" id="uc007ukq.2">
    <property type="organism name" value="mouse"/>
</dbReference>
<dbReference type="AGR" id="MGI:2444129"/>
<dbReference type="CTD" id="10687"/>
<dbReference type="MGI" id="MGI:2444129">
    <property type="gene designation" value="Pnma2"/>
</dbReference>
<dbReference type="VEuPathDB" id="HostDB:ENSMUSG00000046204"/>
<dbReference type="eggNOG" id="ENOG502RWTN">
    <property type="taxonomic scope" value="Eukaryota"/>
</dbReference>
<dbReference type="GeneTree" id="ENSGT01030000234522"/>
<dbReference type="HOGENOM" id="CLU_014694_0_0_1"/>
<dbReference type="InParanoid" id="Q8BHK0"/>
<dbReference type="OMA" id="EMINEAH"/>
<dbReference type="OrthoDB" id="115435at2759"/>
<dbReference type="PhylomeDB" id="Q8BHK0"/>
<dbReference type="TreeFam" id="TF335054"/>
<dbReference type="BioGRID-ORCS" id="239157">
    <property type="hits" value="0 hits in 76 CRISPR screens"/>
</dbReference>
<dbReference type="ChiTaRS" id="Pnma2">
    <property type="organism name" value="mouse"/>
</dbReference>
<dbReference type="PRO" id="PR:Q8BHK0"/>
<dbReference type="Proteomes" id="UP000000589">
    <property type="component" value="Chromosome 14"/>
</dbReference>
<dbReference type="RNAct" id="Q8BHK0">
    <property type="molecule type" value="protein"/>
</dbReference>
<dbReference type="Bgee" id="ENSMUSG00000046204">
    <property type="expression patterns" value="Expressed in ventromedial nucleus of hypothalamus and 119 other cell types or tissues"/>
</dbReference>
<dbReference type="GO" id="GO:0005730">
    <property type="term" value="C:nucleolus"/>
    <property type="evidence" value="ECO:0007669"/>
    <property type="project" value="UniProtKB-SubCell"/>
</dbReference>
<dbReference type="InterPro" id="IPR026523">
    <property type="entry name" value="PNMA"/>
</dbReference>
<dbReference type="InterPro" id="IPR048270">
    <property type="entry name" value="PNMA_C"/>
</dbReference>
<dbReference type="InterPro" id="IPR048271">
    <property type="entry name" value="PNMA_N"/>
</dbReference>
<dbReference type="PANTHER" id="PTHR23095">
    <property type="entry name" value="PARANEOPLASTIC ANTIGEN"/>
    <property type="match status" value="1"/>
</dbReference>
<dbReference type="PANTHER" id="PTHR23095:SF16">
    <property type="entry name" value="PARANEOPLASTIC ANTIGEN MA2"/>
    <property type="match status" value="1"/>
</dbReference>
<dbReference type="Pfam" id="PF14893">
    <property type="entry name" value="PNMA"/>
    <property type="match status" value="1"/>
</dbReference>
<dbReference type="Pfam" id="PF20846">
    <property type="entry name" value="PNMA_N"/>
    <property type="match status" value="1"/>
</dbReference>
<evidence type="ECO:0000250" key="1"/>
<evidence type="ECO:0000250" key="2">
    <source>
        <dbReference type="UniProtKB" id="Q9UL42"/>
    </source>
</evidence>
<evidence type="ECO:0000256" key="3">
    <source>
        <dbReference type="SAM" id="MobiDB-lite"/>
    </source>
</evidence>
<evidence type="ECO:0000269" key="4">
    <source>
    </source>
</evidence>
<evidence type="ECO:0000305" key="5"/>
<evidence type="ECO:0007829" key="6">
    <source>
        <dbReference type="PDB" id="8RB3"/>
    </source>
</evidence>
<evidence type="ECO:0007829" key="7">
    <source>
        <dbReference type="PDB" id="8RB4"/>
    </source>
</evidence>
<reference key="1">
    <citation type="journal article" date="2005" name="Science">
        <title>The transcriptional landscape of the mammalian genome.</title>
        <authorList>
            <person name="Carninci P."/>
            <person name="Kasukawa T."/>
            <person name="Katayama S."/>
            <person name="Gough J."/>
            <person name="Frith M.C."/>
            <person name="Maeda N."/>
            <person name="Oyama R."/>
            <person name="Ravasi T."/>
            <person name="Lenhard B."/>
            <person name="Wells C."/>
            <person name="Kodzius R."/>
            <person name="Shimokawa K."/>
            <person name="Bajic V.B."/>
            <person name="Brenner S.E."/>
            <person name="Batalov S."/>
            <person name="Forrest A.R."/>
            <person name="Zavolan M."/>
            <person name="Davis M.J."/>
            <person name="Wilming L.G."/>
            <person name="Aidinis V."/>
            <person name="Allen J.E."/>
            <person name="Ambesi-Impiombato A."/>
            <person name="Apweiler R."/>
            <person name="Aturaliya R.N."/>
            <person name="Bailey T.L."/>
            <person name="Bansal M."/>
            <person name="Baxter L."/>
            <person name="Beisel K.W."/>
            <person name="Bersano T."/>
            <person name="Bono H."/>
            <person name="Chalk A.M."/>
            <person name="Chiu K.P."/>
            <person name="Choudhary V."/>
            <person name="Christoffels A."/>
            <person name="Clutterbuck D.R."/>
            <person name="Crowe M.L."/>
            <person name="Dalla E."/>
            <person name="Dalrymple B.P."/>
            <person name="de Bono B."/>
            <person name="Della Gatta G."/>
            <person name="di Bernardo D."/>
            <person name="Down T."/>
            <person name="Engstrom P."/>
            <person name="Fagiolini M."/>
            <person name="Faulkner G."/>
            <person name="Fletcher C.F."/>
            <person name="Fukushima T."/>
            <person name="Furuno M."/>
            <person name="Futaki S."/>
            <person name="Gariboldi M."/>
            <person name="Georgii-Hemming P."/>
            <person name="Gingeras T.R."/>
            <person name="Gojobori T."/>
            <person name="Green R.E."/>
            <person name="Gustincich S."/>
            <person name="Harbers M."/>
            <person name="Hayashi Y."/>
            <person name="Hensch T.K."/>
            <person name="Hirokawa N."/>
            <person name="Hill D."/>
            <person name="Huminiecki L."/>
            <person name="Iacono M."/>
            <person name="Ikeo K."/>
            <person name="Iwama A."/>
            <person name="Ishikawa T."/>
            <person name="Jakt M."/>
            <person name="Kanapin A."/>
            <person name="Katoh M."/>
            <person name="Kawasawa Y."/>
            <person name="Kelso J."/>
            <person name="Kitamura H."/>
            <person name="Kitano H."/>
            <person name="Kollias G."/>
            <person name="Krishnan S.P."/>
            <person name="Kruger A."/>
            <person name="Kummerfeld S.K."/>
            <person name="Kurochkin I.V."/>
            <person name="Lareau L.F."/>
            <person name="Lazarevic D."/>
            <person name="Lipovich L."/>
            <person name="Liu J."/>
            <person name="Liuni S."/>
            <person name="McWilliam S."/>
            <person name="Madan Babu M."/>
            <person name="Madera M."/>
            <person name="Marchionni L."/>
            <person name="Matsuda H."/>
            <person name="Matsuzawa S."/>
            <person name="Miki H."/>
            <person name="Mignone F."/>
            <person name="Miyake S."/>
            <person name="Morris K."/>
            <person name="Mottagui-Tabar S."/>
            <person name="Mulder N."/>
            <person name="Nakano N."/>
            <person name="Nakauchi H."/>
            <person name="Ng P."/>
            <person name="Nilsson R."/>
            <person name="Nishiguchi S."/>
            <person name="Nishikawa S."/>
            <person name="Nori F."/>
            <person name="Ohara O."/>
            <person name="Okazaki Y."/>
            <person name="Orlando V."/>
            <person name="Pang K.C."/>
            <person name="Pavan W.J."/>
            <person name="Pavesi G."/>
            <person name="Pesole G."/>
            <person name="Petrovsky N."/>
            <person name="Piazza S."/>
            <person name="Reed J."/>
            <person name="Reid J.F."/>
            <person name="Ring B.Z."/>
            <person name="Ringwald M."/>
            <person name="Rost B."/>
            <person name="Ruan Y."/>
            <person name="Salzberg S.L."/>
            <person name="Sandelin A."/>
            <person name="Schneider C."/>
            <person name="Schoenbach C."/>
            <person name="Sekiguchi K."/>
            <person name="Semple C.A."/>
            <person name="Seno S."/>
            <person name="Sessa L."/>
            <person name="Sheng Y."/>
            <person name="Shibata Y."/>
            <person name="Shimada H."/>
            <person name="Shimada K."/>
            <person name="Silva D."/>
            <person name="Sinclair B."/>
            <person name="Sperling S."/>
            <person name="Stupka E."/>
            <person name="Sugiura K."/>
            <person name="Sultana R."/>
            <person name="Takenaka Y."/>
            <person name="Taki K."/>
            <person name="Tammoja K."/>
            <person name="Tan S.L."/>
            <person name="Tang S."/>
            <person name="Taylor M.S."/>
            <person name="Tegner J."/>
            <person name="Teichmann S.A."/>
            <person name="Ueda H.R."/>
            <person name="van Nimwegen E."/>
            <person name="Verardo R."/>
            <person name="Wei C.L."/>
            <person name="Yagi K."/>
            <person name="Yamanishi H."/>
            <person name="Zabarovsky E."/>
            <person name="Zhu S."/>
            <person name="Zimmer A."/>
            <person name="Hide W."/>
            <person name="Bult C."/>
            <person name="Grimmond S.M."/>
            <person name="Teasdale R.D."/>
            <person name="Liu E.T."/>
            <person name="Brusic V."/>
            <person name="Quackenbush J."/>
            <person name="Wahlestedt C."/>
            <person name="Mattick J.S."/>
            <person name="Hume D.A."/>
            <person name="Kai C."/>
            <person name="Sasaki D."/>
            <person name="Tomaru Y."/>
            <person name="Fukuda S."/>
            <person name="Kanamori-Katayama M."/>
            <person name="Suzuki M."/>
            <person name="Aoki J."/>
            <person name="Arakawa T."/>
            <person name="Iida J."/>
            <person name="Imamura K."/>
            <person name="Itoh M."/>
            <person name="Kato T."/>
            <person name="Kawaji H."/>
            <person name="Kawagashira N."/>
            <person name="Kawashima T."/>
            <person name="Kojima M."/>
            <person name="Kondo S."/>
            <person name="Konno H."/>
            <person name="Nakano K."/>
            <person name="Ninomiya N."/>
            <person name="Nishio T."/>
            <person name="Okada M."/>
            <person name="Plessy C."/>
            <person name="Shibata K."/>
            <person name="Shiraki T."/>
            <person name="Suzuki S."/>
            <person name="Tagami M."/>
            <person name="Waki K."/>
            <person name="Watahiki A."/>
            <person name="Okamura-Oho Y."/>
            <person name="Suzuki H."/>
            <person name="Kawai J."/>
            <person name="Hayashizaki Y."/>
        </authorList>
    </citation>
    <scope>NUCLEOTIDE SEQUENCE [LARGE SCALE MRNA]</scope>
    <source>
        <strain>C57BL/6J</strain>
        <tissue>Brain cortex</tissue>
    </source>
</reference>
<reference key="2">
    <citation type="journal article" date="2004" name="Genome Res.">
        <title>The status, quality, and expansion of the NIH full-length cDNA project: the Mammalian Gene Collection (MGC).</title>
        <authorList>
            <consortium name="The MGC Project Team"/>
        </authorList>
    </citation>
    <scope>NUCLEOTIDE SEQUENCE [LARGE SCALE MRNA]</scope>
    <source>
        <strain>C57BL/6J</strain>
        <tissue>Brain</tissue>
    </source>
</reference>
<reference key="3">
    <citation type="journal article" date="2009" name="Cereb. Cortex">
        <title>Paraneoplastic antigen-like 5 gene (PNMA5) is preferentially expressed in the association areas in a primate specific manner.</title>
        <authorList>
            <person name="Takaji M."/>
            <person name="Komatsu Y."/>
            <person name="Watakabe A."/>
            <person name="Hashikawa T."/>
            <person name="Yamamori T."/>
        </authorList>
    </citation>
    <scope>TISSUE SPECIFICITY</scope>
</reference>
<organism>
    <name type="scientific">Mus musculus</name>
    <name type="common">Mouse</name>
    <dbReference type="NCBI Taxonomy" id="10090"/>
    <lineage>
        <taxon>Eukaryota</taxon>
        <taxon>Metazoa</taxon>
        <taxon>Chordata</taxon>
        <taxon>Craniata</taxon>
        <taxon>Vertebrata</taxon>
        <taxon>Euteleostomi</taxon>
        <taxon>Mammalia</taxon>
        <taxon>Eutheria</taxon>
        <taxon>Euarchontoglires</taxon>
        <taxon>Glires</taxon>
        <taxon>Rodentia</taxon>
        <taxon>Myomorpha</taxon>
        <taxon>Muroidea</taxon>
        <taxon>Muridae</taxon>
        <taxon>Murinae</taxon>
        <taxon>Mus</taxon>
        <taxon>Mus</taxon>
    </lineage>
</organism>
<accession>Q8BHK0</accession>
<sequence length="365" mass="41201">MAVALLEEWCKIMGVDVQKSLLVVDIPVDCGEPEIQTVLQEALKCVGSYRLLGKIFQKQDNTSVVLVELMEDTDMSVVPSEVQGKGGVWKVIFKTPNQDTEFLQRLNLFLEKEGQTVAGMFRALKHEGVSPATPPCTSPELLAHLTGQAMVHGQRPLLPVKYCKMRIFSGSTAAAPEEEPFEVWLEQATEIAKEWPIPEAEKKRWVAESLRGPALDLMHIVQADNPSISVGECLEAFKQVFGSTESRRTSQVKYLRTYQQEGEKISAYVLRLETLLRRAVEKRAIPRNIADQVRLEQVMAGANLGNVLWCRLQELKDQGPLPTFLQLMKVIREEEEEEDAYFEQESREEPGEREGSGCWNNSRNN</sequence>
<protein>
    <recommendedName>
        <fullName>Paraneoplastic antigen Ma2 homolog</fullName>
    </recommendedName>
</protein>